<reference key="1">
    <citation type="journal article" date="2004" name="Gene">
        <title>TBP-associated factors in Arabidopsis.</title>
        <authorList>
            <person name="Lago C."/>
            <person name="Clerici E."/>
            <person name="Mizzi L."/>
            <person name="Colombo L."/>
            <person name="Kater M.M."/>
        </authorList>
    </citation>
    <scope>NUCLEOTIDE SEQUENCE [MRNA]</scope>
    <scope>IDENTIFICATION</scope>
    <scope>NOMENCLATURE</scope>
    <scope>TISSUE SPECIFICITY</scope>
</reference>
<reference key="2">
    <citation type="journal article" date="2007" name="Plant Mol. Biol.">
        <title>Yeast two-hybrid map of Arabidopsis TFIID.</title>
        <authorList>
            <person name="Lawit S.J."/>
            <person name="O'Grady K."/>
            <person name="Gurley W.B."/>
            <person name="Czarnecka-Verner E."/>
        </authorList>
    </citation>
    <scope>NUCLEOTIDE SEQUENCE [MRNA] (ISOFORM 2)</scope>
    <scope>INTERACTION WITH TAF1</scope>
    <scope>INDUCTION BY HEAT</scope>
    <source>
        <strain>cv. Columbia</strain>
    </source>
</reference>
<reference key="3">
    <citation type="journal article" date="2000" name="Nature">
        <title>Sequence and analysis of chromosome 1 of the plant Arabidopsis thaliana.</title>
        <authorList>
            <person name="Theologis A."/>
            <person name="Ecker J.R."/>
            <person name="Palm C.J."/>
            <person name="Federspiel N.A."/>
            <person name="Kaul S."/>
            <person name="White O."/>
            <person name="Alonso J."/>
            <person name="Altafi H."/>
            <person name="Araujo R."/>
            <person name="Bowman C.L."/>
            <person name="Brooks S.Y."/>
            <person name="Buehler E."/>
            <person name="Chan A."/>
            <person name="Chao Q."/>
            <person name="Chen H."/>
            <person name="Cheuk R.F."/>
            <person name="Chin C.W."/>
            <person name="Chung M.K."/>
            <person name="Conn L."/>
            <person name="Conway A.B."/>
            <person name="Conway A.R."/>
            <person name="Creasy T.H."/>
            <person name="Dewar K."/>
            <person name="Dunn P."/>
            <person name="Etgu P."/>
            <person name="Feldblyum T.V."/>
            <person name="Feng J.-D."/>
            <person name="Fong B."/>
            <person name="Fujii C.Y."/>
            <person name="Gill J.E."/>
            <person name="Goldsmith A.D."/>
            <person name="Haas B."/>
            <person name="Hansen N.F."/>
            <person name="Hughes B."/>
            <person name="Huizar L."/>
            <person name="Hunter J.L."/>
            <person name="Jenkins J."/>
            <person name="Johnson-Hopson C."/>
            <person name="Khan S."/>
            <person name="Khaykin E."/>
            <person name="Kim C.J."/>
            <person name="Koo H.L."/>
            <person name="Kremenetskaia I."/>
            <person name="Kurtz D.B."/>
            <person name="Kwan A."/>
            <person name="Lam B."/>
            <person name="Langin-Hooper S."/>
            <person name="Lee A."/>
            <person name="Lee J.M."/>
            <person name="Lenz C.A."/>
            <person name="Li J.H."/>
            <person name="Li Y.-P."/>
            <person name="Lin X."/>
            <person name="Liu S.X."/>
            <person name="Liu Z.A."/>
            <person name="Luros J.S."/>
            <person name="Maiti R."/>
            <person name="Marziali A."/>
            <person name="Militscher J."/>
            <person name="Miranda M."/>
            <person name="Nguyen M."/>
            <person name="Nierman W.C."/>
            <person name="Osborne B.I."/>
            <person name="Pai G."/>
            <person name="Peterson J."/>
            <person name="Pham P.K."/>
            <person name="Rizzo M."/>
            <person name="Rooney T."/>
            <person name="Rowley D."/>
            <person name="Sakano H."/>
            <person name="Salzberg S.L."/>
            <person name="Schwartz J.R."/>
            <person name="Shinn P."/>
            <person name="Southwick A.M."/>
            <person name="Sun H."/>
            <person name="Tallon L.J."/>
            <person name="Tambunga G."/>
            <person name="Toriumi M.J."/>
            <person name="Town C.D."/>
            <person name="Utterback T."/>
            <person name="Van Aken S."/>
            <person name="Vaysberg M."/>
            <person name="Vysotskaia V.S."/>
            <person name="Walker M."/>
            <person name="Wu D."/>
            <person name="Yu G."/>
            <person name="Fraser C.M."/>
            <person name="Venter J.C."/>
            <person name="Davis R.W."/>
        </authorList>
    </citation>
    <scope>NUCLEOTIDE SEQUENCE [LARGE SCALE GENOMIC DNA]</scope>
    <source>
        <strain>cv. Columbia</strain>
    </source>
</reference>
<reference key="4">
    <citation type="journal article" date="2017" name="Plant J.">
        <title>Araport11: a complete reannotation of the Arabidopsis thaliana reference genome.</title>
        <authorList>
            <person name="Cheng C.Y."/>
            <person name="Krishnakumar V."/>
            <person name="Chan A.P."/>
            <person name="Thibaud-Nissen F."/>
            <person name="Schobel S."/>
            <person name="Town C.D."/>
        </authorList>
    </citation>
    <scope>GENOME REANNOTATION</scope>
    <source>
        <strain>cv. Columbia</strain>
    </source>
</reference>
<reference key="5">
    <citation type="submission" date="2004-07" db="EMBL/GenBank/DDBJ databases">
        <title>Arabidopsis ORF clones.</title>
        <authorList>
            <person name="Cheuk R."/>
            <person name="Chen H."/>
            <person name="Kim C.J."/>
            <person name="Shinn P."/>
            <person name="Ecker J.R."/>
        </authorList>
    </citation>
    <scope>NUCLEOTIDE SEQUENCE [LARGE SCALE MRNA] (ISOFORM 2)</scope>
</reference>
<reference key="6">
    <citation type="journal article" date="2009" name="DNA Res.">
        <title>Analysis of multiple occurrences of alternative splicing events in Arabidopsis thaliana using novel sequenced full-length cDNAs.</title>
        <authorList>
            <person name="Iida K."/>
            <person name="Fukami-Kobayashi K."/>
            <person name="Toyoda A."/>
            <person name="Sakaki Y."/>
            <person name="Kobayashi M."/>
            <person name="Seki M."/>
            <person name="Shinozaki K."/>
        </authorList>
    </citation>
    <scope>NUCLEOTIDE SEQUENCE [LARGE SCALE MRNA] (ISOFORMS 1 AND 2)</scope>
    <source>
        <strain>cv. Columbia</strain>
    </source>
</reference>
<comment type="function">
    <text evidence="1">TAFs are components of the transcription factor IID (TFIID) complex that is essential for mediating regulation of RNA polymerase transcription.</text>
</comment>
<comment type="subunit">
    <text evidence="3">Component of the TFIID complex. TFIID is composed of TATA binding protein (TBP) and a number of TBP-associated factors (TAFs) whose MWs range from 14-217 kDa. Interacts with TAF1.</text>
</comment>
<comment type="subcellular location">
    <subcellularLocation>
        <location evidence="7">Nucleus</location>
    </subcellularLocation>
</comment>
<comment type="alternative products">
    <event type="alternative splicing"/>
    <isoform>
        <id>B9DG24-1</id>
        <name>1</name>
        <sequence type="displayed"/>
    </isoform>
    <isoform>
        <id>B9DG24-2</id>
        <name>2</name>
        <sequence type="described" ref="VSP_053306 VSP_053307"/>
    </isoform>
</comment>
<comment type="tissue specificity">
    <text evidence="2">Expressed in roots, leaves and inflorescences.</text>
</comment>
<comment type="induction">
    <text evidence="3">Up-regulated by heat shock.</text>
</comment>
<comment type="similarity">
    <text evidence="7">Belongs to the TAF7 family.</text>
</comment>
<dbReference type="EMBL" id="AY463622">
    <property type="protein sequence ID" value="AAR28024.1"/>
    <property type="molecule type" value="mRNA"/>
</dbReference>
<dbReference type="EMBL" id="AC027034">
    <property type="protein sequence ID" value="AAG51559.1"/>
    <property type="molecule type" value="Genomic_DNA"/>
</dbReference>
<dbReference type="EMBL" id="CP002684">
    <property type="protein sequence ID" value="AEE33220.1"/>
    <property type="molecule type" value="Genomic_DNA"/>
</dbReference>
<dbReference type="EMBL" id="CP002684">
    <property type="protein sequence ID" value="AEE33221.1"/>
    <property type="molecule type" value="Genomic_DNA"/>
</dbReference>
<dbReference type="EMBL" id="BT011002">
    <property type="protein sequence ID" value="AAR25638.1"/>
    <property type="molecule type" value="mRNA"/>
</dbReference>
<dbReference type="EMBL" id="BT015099">
    <property type="protein sequence ID" value="AAT71971.1"/>
    <property type="molecule type" value="mRNA"/>
</dbReference>
<dbReference type="EMBL" id="AK316996">
    <property type="protein sequence ID" value="BAH19691.1"/>
    <property type="molecule type" value="mRNA"/>
</dbReference>
<dbReference type="EMBL" id="AK316930">
    <property type="protein sequence ID" value="BAH19635.1"/>
    <property type="molecule type" value="mRNA"/>
</dbReference>
<dbReference type="PIR" id="A96595">
    <property type="entry name" value="A96595"/>
</dbReference>
<dbReference type="RefSeq" id="NP_001031194.1">
    <molecule id="B9DG24-1"/>
    <property type="nucleotide sequence ID" value="NM_001036117.1"/>
</dbReference>
<dbReference type="RefSeq" id="NP_175926.1">
    <molecule id="B9DG24-2"/>
    <property type="nucleotide sequence ID" value="NM_104405.4"/>
</dbReference>
<dbReference type="SMR" id="B9DG24"/>
<dbReference type="BioGRID" id="27200">
    <property type="interactions" value="3"/>
</dbReference>
<dbReference type="FunCoup" id="B9DG24">
    <property type="interactions" value="73"/>
</dbReference>
<dbReference type="IntAct" id="B9DG24">
    <property type="interactions" value="2"/>
</dbReference>
<dbReference type="STRING" id="3702.B9DG24"/>
<dbReference type="PaxDb" id="3702-AT1G55300.2"/>
<dbReference type="ProteomicsDB" id="234133">
    <molecule id="B9DG24-1"/>
</dbReference>
<dbReference type="EnsemblPlants" id="AT1G55300.1">
    <molecule id="B9DG24-2"/>
    <property type="protein sequence ID" value="AT1G55300.1"/>
    <property type="gene ID" value="AT1G55300"/>
</dbReference>
<dbReference type="EnsemblPlants" id="AT1G55300.2">
    <molecule id="B9DG24-1"/>
    <property type="protein sequence ID" value="AT1G55300.2"/>
    <property type="gene ID" value="AT1G55300"/>
</dbReference>
<dbReference type="GeneID" id="841975"/>
<dbReference type="Gramene" id="AT1G55300.1">
    <molecule id="B9DG24-2"/>
    <property type="protein sequence ID" value="AT1G55300.1"/>
    <property type="gene ID" value="AT1G55300"/>
</dbReference>
<dbReference type="Gramene" id="AT1G55300.2">
    <molecule id="B9DG24-1"/>
    <property type="protein sequence ID" value="AT1G55300.2"/>
    <property type="gene ID" value="AT1G55300"/>
</dbReference>
<dbReference type="KEGG" id="ath:AT1G55300"/>
<dbReference type="Araport" id="AT1G55300"/>
<dbReference type="TAIR" id="AT1G55300">
    <property type="gene designation" value="TAF7"/>
</dbReference>
<dbReference type="eggNOG" id="KOG4011">
    <property type="taxonomic scope" value="Eukaryota"/>
</dbReference>
<dbReference type="HOGENOM" id="CLU_037860_3_0_1"/>
<dbReference type="InParanoid" id="B9DG24"/>
<dbReference type="OMA" id="NENFPAS"/>
<dbReference type="OrthoDB" id="153872at2759"/>
<dbReference type="PhylomeDB" id="B9DG24"/>
<dbReference type="PRO" id="PR:B9DG24"/>
<dbReference type="Proteomes" id="UP000006548">
    <property type="component" value="Chromosome 1"/>
</dbReference>
<dbReference type="ExpressionAtlas" id="B9DG24">
    <property type="expression patterns" value="baseline and differential"/>
</dbReference>
<dbReference type="GO" id="GO:0005669">
    <property type="term" value="C:transcription factor TFIID complex"/>
    <property type="evidence" value="ECO:0007669"/>
    <property type="project" value="InterPro"/>
</dbReference>
<dbReference type="GO" id="GO:0006367">
    <property type="term" value="P:transcription initiation at RNA polymerase II promoter"/>
    <property type="evidence" value="ECO:0007669"/>
    <property type="project" value="InterPro"/>
</dbReference>
<dbReference type="CDD" id="cd08047">
    <property type="entry name" value="TAF7"/>
    <property type="match status" value="1"/>
</dbReference>
<dbReference type="InterPro" id="IPR037817">
    <property type="entry name" value="TAF7"/>
</dbReference>
<dbReference type="InterPro" id="IPR006751">
    <property type="entry name" value="TAFII55_prot_cons_reg"/>
</dbReference>
<dbReference type="PANTHER" id="PTHR12228:SF0">
    <property type="entry name" value="TATA-BOX BINDING PROTEIN ASSOCIATED FACTOR 7"/>
    <property type="match status" value="1"/>
</dbReference>
<dbReference type="PANTHER" id="PTHR12228">
    <property type="entry name" value="TRANSCRIPTION INITIATION FACTOR TFIID 55 KD SUBUNIT-RELATED"/>
    <property type="match status" value="1"/>
</dbReference>
<dbReference type="Pfam" id="PF04658">
    <property type="entry name" value="TAFII55_N"/>
    <property type="match status" value="1"/>
</dbReference>
<dbReference type="SMART" id="SM01370">
    <property type="entry name" value="TAFII55_N"/>
    <property type="match status" value="1"/>
</dbReference>
<organism>
    <name type="scientific">Arabidopsis thaliana</name>
    <name type="common">Mouse-ear cress</name>
    <dbReference type="NCBI Taxonomy" id="3702"/>
    <lineage>
        <taxon>Eukaryota</taxon>
        <taxon>Viridiplantae</taxon>
        <taxon>Streptophyta</taxon>
        <taxon>Embryophyta</taxon>
        <taxon>Tracheophyta</taxon>
        <taxon>Spermatophyta</taxon>
        <taxon>Magnoliopsida</taxon>
        <taxon>eudicotyledons</taxon>
        <taxon>Gunneridae</taxon>
        <taxon>Pentapetalae</taxon>
        <taxon>rosids</taxon>
        <taxon>malvids</taxon>
        <taxon>Brassicales</taxon>
        <taxon>Brassicaceae</taxon>
        <taxon>Camelineae</taxon>
        <taxon>Arabidopsis</taxon>
    </lineage>
</organism>
<feature type="chain" id="PRO_0000424044" description="Transcription initiation factor TFIID subunit 7">
    <location>
        <begin position="1"/>
        <end position="239"/>
    </location>
</feature>
<feature type="splice variant" id="VSP_053306" description="In isoform 2." evidence="4 5 6">
    <original>SFSFYFRHMMCLYLLLGFSNFIYLNFFWCRYMSKRNQLRTRMLVMQVRKYLLLHLHL</original>
    <variation>HEQEEPATNENASNASKKVSSSSPTPVEKPEAPETGTSNPTGVEPERSESEDSDDSM</variation>
    <location>
        <begin position="147"/>
        <end position="203"/>
    </location>
</feature>
<feature type="splice variant" id="VSP_053307" description="In isoform 2." evidence="4 5 6">
    <location>
        <begin position="204"/>
        <end position="239"/>
    </location>
</feature>
<accession>B9DG24</accession>
<accession>Q9C8A0</accession>
<gene>
    <name type="primary">TAF7</name>
    <name type="ordered locus">At1g55300</name>
    <name type="ORF">F7A10.3</name>
</gene>
<sequence length="239" mass="28085">MEEQFILRVPPSVSERIDRLLSEDASTSDEIPLDLFFSEDGRNGTFMIGNDEFPASLLDLPAVVESFKTYDDCALVKTADIGQMIMVREPGDPAPNTVEYRHGLTPPMKDARKRRFRREPDLNPELVQRVERDLLNILSGGTVENVSFSFYFRHMMCLYLLLGFSNFIYLNFFWCRYMSKRNQLRTRMLVMQVRKYLLLHLHLLKSLKLLRQALVIQQELNRREVNQKILMIQCEFIII</sequence>
<keyword id="KW-0010">Activator</keyword>
<keyword id="KW-0025">Alternative splicing</keyword>
<keyword id="KW-0539">Nucleus</keyword>
<keyword id="KW-1185">Reference proteome</keyword>
<keyword id="KW-0804">Transcription</keyword>
<keyword id="KW-0805">Transcription regulation</keyword>
<proteinExistence type="evidence at protein level"/>
<protein>
    <recommendedName>
        <fullName>Transcription initiation factor TFIID subunit 7</fullName>
    </recommendedName>
    <alternativeName>
        <fullName>TBP-associated factor 7</fullName>
        <shortName>AtTAF7</shortName>
    </alternativeName>
</protein>
<name>TAF7_ARATH</name>
<evidence type="ECO:0000250" key="1"/>
<evidence type="ECO:0000269" key="2">
    <source>
    </source>
</evidence>
<evidence type="ECO:0000269" key="3">
    <source>
    </source>
</evidence>
<evidence type="ECO:0000303" key="4">
    <source>
    </source>
</evidence>
<evidence type="ECO:0000303" key="5">
    <source>
    </source>
</evidence>
<evidence type="ECO:0000303" key="6">
    <source ref="5"/>
</evidence>
<evidence type="ECO:0000305" key="7"/>